<feature type="chain" id="PRO_0000246230" description="GPI mannosyltransferase 1">
    <location>
        <begin position="1"/>
        <end position="422"/>
    </location>
</feature>
<feature type="transmembrane region" description="Helical" evidence="2">
    <location>
        <begin position="10"/>
        <end position="30"/>
    </location>
</feature>
<feature type="transmembrane region" description="Helical" evidence="2">
    <location>
        <begin position="82"/>
        <end position="102"/>
    </location>
</feature>
<feature type="transmembrane region" description="Helical" evidence="2">
    <location>
        <begin position="162"/>
        <end position="182"/>
    </location>
</feature>
<feature type="transmembrane region" description="Helical" evidence="2">
    <location>
        <begin position="216"/>
        <end position="236"/>
    </location>
</feature>
<feature type="transmembrane region" description="Helical" evidence="2">
    <location>
        <begin position="282"/>
        <end position="302"/>
    </location>
</feature>
<feature type="transmembrane region" description="Helical" evidence="2">
    <location>
        <begin position="327"/>
        <end position="347"/>
    </location>
</feature>
<feature type="transmembrane region" description="Helical" evidence="2">
    <location>
        <begin position="352"/>
        <end position="372"/>
    </location>
</feature>
<feature type="transmembrane region" description="Helical" evidence="2">
    <location>
        <begin position="385"/>
        <end position="405"/>
    </location>
</feature>
<comment type="function">
    <text evidence="1">Mannosyltransferase involved in glycosylphosphatidylinositol-anchor biosynthesis. Transfers the first alpha-1,4-mannose to GlcN-acyl-PI during GPI precursor assembly. Required for cell wall integrity (By similarity).</text>
</comment>
<comment type="pathway">
    <text>Glycolipid biosynthesis; glycosylphosphatidylinositol-anchor biosynthesis.</text>
</comment>
<comment type="subcellular location">
    <subcellularLocation>
        <location evidence="1">Endoplasmic reticulum membrane</location>
        <topology evidence="1">Multi-pass membrane protein</topology>
    </subcellularLocation>
</comment>
<comment type="similarity">
    <text evidence="3">Belongs to the PIGM family.</text>
</comment>
<organism>
    <name type="scientific">Gibberella zeae (strain ATCC MYA-4620 / CBS 123657 / FGSC 9075 / NRRL 31084 / PH-1)</name>
    <name type="common">Wheat head blight fungus</name>
    <name type="synonym">Fusarium graminearum</name>
    <dbReference type="NCBI Taxonomy" id="229533"/>
    <lineage>
        <taxon>Eukaryota</taxon>
        <taxon>Fungi</taxon>
        <taxon>Dikarya</taxon>
        <taxon>Ascomycota</taxon>
        <taxon>Pezizomycotina</taxon>
        <taxon>Sordariomycetes</taxon>
        <taxon>Hypocreomycetidae</taxon>
        <taxon>Hypocreales</taxon>
        <taxon>Nectriaceae</taxon>
        <taxon>Fusarium</taxon>
    </lineage>
</organism>
<dbReference type="EC" id="2.4.1.-"/>
<dbReference type="EMBL" id="DS231668">
    <property type="protein sequence ID" value="ESU15956.1"/>
    <property type="molecule type" value="Genomic_DNA"/>
</dbReference>
<dbReference type="EMBL" id="HG970335">
    <property type="protein sequence ID" value="CEF84010.1"/>
    <property type="molecule type" value="Genomic_DNA"/>
</dbReference>
<dbReference type="RefSeq" id="XP_011328360.1">
    <property type="nucleotide sequence ID" value="XM_011330058.1"/>
</dbReference>
<dbReference type="SMR" id="Q4I073"/>
<dbReference type="FunCoup" id="Q4I073">
    <property type="interactions" value="618"/>
</dbReference>
<dbReference type="STRING" id="229533.Q4I073"/>
<dbReference type="GeneID" id="23556341"/>
<dbReference type="KEGG" id="fgr:FGSG_09385"/>
<dbReference type="VEuPathDB" id="FungiDB:FGRAMPH1_01G27217"/>
<dbReference type="eggNOG" id="KOG3893">
    <property type="taxonomic scope" value="Eukaryota"/>
</dbReference>
<dbReference type="HOGENOM" id="CLU_024220_1_0_1"/>
<dbReference type="InParanoid" id="Q4I073"/>
<dbReference type="OrthoDB" id="47655at110618"/>
<dbReference type="UniPathway" id="UPA00196"/>
<dbReference type="Proteomes" id="UP000070720">
    <property type="component" value="Chromosome 4"/>
</dbReference>
<dbReference type="GO" id="GO:0005789">
    <property type="term" value="C:endoplasmic reticulum membrane"/>
    <property type="evidence" value="ECO:0007669"/>
    <property type="project" value="UniProtKB-SubCell"/>
</dbReference>
<dbReference type="GO" id="GO:1990529">
    <property type="term" value="C:glycosylphosphatidylinositol-mannosyltransferase I complex"/>
    <property type="evidence" value="ECO:0007669"/>
    <property type="project" value="TreeGrafter"/>
</dbReference>
<dbReference type="GO" id="GO:0051751">
    <property type="term" value="F:alpha-1,4-mannosyltransferase activity"/>
    <property type="evidence" value="ECO:0007669"/>
    <property type="project" value="InterPro"/>
</dbReference>
<dbReference type="GO" id="GO:0004376">
    <property type="term" value="F:glycolipid mannosyltransferase activity"/>
    <property type="evidence" value="ECO:0007669"/>
    <property type="project" value="InterPro"/>
</dbReference>
<dbReference type="GO" id="GO:0071555">
    <property type="term" value="P:cell wall organization"/>
    <property type="evidence" value="ECO:0007669"/>
    <property type="project" value="UniProtKB-KW"/>
</dbReference>
<dbReference type="GO" id="GO:0006506">
    <property type="term" value="P:GPI anchor biosynthetic process"/>
    <property type="evidence" value="ECO:0007669"/>
    <property type="project" value="UniProtKB-UniPathway"/>
</dbReference>
<dbReference type="InterPro" id="IPR007704">
    <property type="entry name" value="PIG-M"/>
</dbReference>
<dbReference type="PANTHER" id="PTHR12886:SF0">
    <property type="entry name" value="GPI MANNOSYLTRANSFERASE 1"/>
    <property type="match status" value="1"/>
</dbReference>
<dbReference type="PANTHER" id="PTHR12886">
    <property type="entry name" value="PIG-M MANNOSYLTRANSFERASE"/>
    <property type="match status" value="1"/>
</dbReference>
<dbReference type="Pfam" id="PF05007">
    <property type="entry name" value="Mannosyl_trans"/>
    <property type="match status" value="1"/>
</dbReference>
<reference key="1">
    <citation type="journal article" date="2007" name="Science">
        <title>The Fusarium graminearum genome reveals a link between localized polymorphism and pathogen specialization.</title>
        <authorList>
            <person name="Cuomo C.A."/>
            <person name="Gueldener U."/>
            <person name="Xu J.-R."/>
            <person name="Trail F."/>
            <person name="Turgeon B.G."/>
            <person name="Di Pietro A."/>
            <person name="Walton J.D."/>
            <person name="Ma L.-J."/>
            <person name="Baker S.E."/>
            <person name="Rep M."/>
            <person name="Adam G."/>
            <person name="Antoniw J."/>
            <person name="Baldwin T."/>
            <person name="Calvo S.E."/>
            <person name="Chang Y.-L."/>
            <person name="DeCaprio D."/>
            <person name="Gale L.R."/>
            <person name="Gnerre S."/>
            <person name="Goswami R.S."/>
            <person name="Hammond-Kosack K."/>
            <person name="Harris L.J."/>
            <person name="Hilburn K."/>
            <person name="Kennell J.C."/>
            <person name="Kroken S."/>
            <person name="Magnuson J.K."/>
            <person name="Mannhaupt G."/>
            <person name="Mauceli E.W."/>
            <person name="Mewes H.-W."/>
            <person name="Mitterbauer R."/>
            <person name="Muehlbauer G."/>
            <person name="Muensterkoetter M."/>
            <person name="Nelson D."/>
            <person name="O'Donnell K."/>
            <person name="Ouellet T."/>
            <person name="Qi W."/>
            <person name="Quesneville H."/>
            <person name="Roncero M.I.G."/>
            <person name="Seong K.-Y."/>
            <person name="Tetko I.V."/>
            <person name="Urban M."/>
            <person name="Waalwijk C."/>
            <person name="Ward T.J."/>
            <person name="Yao J."/>
            <person name="Birren B.W."/>
            <person name="Kistler H.C."/>
        </authorList>
    </citation>
    <scope>NUCLEOTIDE SEQUENCE [LARGE SCALE GENOMIC DNA]</scope>
    <source>
        <strain>ATCC MYA-4620 / CBS 123657 / FGSC 9075 / NRRL 31084 / PH-1</strain>
    </source>
</reference>
<reference key="2">
    <citation type="journal article" date="2010" name="Nature">
        <title>Comparative genomics reveals mobile pathogenicity chromosomes in Fusarium.</title>
        <authorList>
            <person name="Ma L.-J."/>
            <person name="van der Does H.C."/>
            <person name="Borkovich K.A."/>
            <person name="Coleman J.J."/>
            <person name="Daboussi M.-J."/>
            <person name="Di Pietro A."/>
            <person name="Dufresne M."/>
            <person name="Freitag M."/>
            <person name="Grabherr M."/>
            <person name="Henrissat B."/>
            <person name="Houterman P.M."/>
            <person name="Kang S."/>
            <person name="Shim W.-B."/>
            <person name="Woloshuk C."/>
            <person name="Xie X."/>
            <person name="Xu J.-R."/>
            <person name="Antoniw J."/>
            <person name="Baker S.E."/>
            <person name="Bluhm B.H."/>
            <person name="Breakspear A."/>
            <person name="Brown D.W."/>
            <person name="Butchko R.A.E."/>
            <person name="Chapman S."/>
            <person name="Coulson R."/>
            <person name="Coutinho P.M."/>
            <person name="Danchin E.G.J."/>
            <person name="Diener A."/>
            <person name="Gale L.R."/>
            <person name="Gardiner D.M."/>
            <person name="Goff S."/>
            <person name="Hammond-Kosack K.E."/>
            <person name="Hilburn K."/>
            <person name="Hua-Van A."/>
            <person name="Jonkers W."/>
            <person name="Kazan K."/>
            <person name="Kodira C.D."/>
            <person name="Koehrsen M."/>
            <person name="Kumar L."/>
            <person name="Lee Y.-H."/>
            <person name="Li L."/>
            <person name="Manners J.M."/>
            <person name="Miranda-Saavedra D."/>
            <person name="Mukherjee M."/>
            <person name="Park G."/>
            <person name="Park J."/>
            <person name="Park S.-Y."/>
            <person name="Proctor R.H."/>
            <person name="Regev A."/>
            <person name="Ruiz-Roldan M.C."/>
            <person name="Sain D."/>
            <person name="Sakthikumar S."/>
            <person name="Sykes S."/>
            <person name="Schwartz D.C."/>
            <person name="Turgeon B.G."/>
            <person name="Wapinski I."/>
            <person name="Yoder O."/>
            <person name="Young S."/>
            <person name="Zeng Q."/>
            <person name="Zhou S."/>
            <person name="Galagan J."/>
            <person name="Cuomo C.A."/>
            <person name="Kistler H.C."/>
            <person name="Rep M."/>
        </authorList>
    </citation>
    <scope>GENOME REANNOTATION</scope>
    <source>
        <strain>ATCC MYA-4620 / CBS 123657 / FGSC 9075 / NRRL 31084 / PH-1</strain>
    </source>
</reference>
<reference key="3">
    <citation type="journal article" date="2015" name="BMC Genomics">
        <title>The completed genome sequence of the pathogenic ascomycete fungus Fusarium graminearum.</title>
        <authorList>
            <person name="King R."/>
            <person name="Urban M."/>
            <person name="Hammond-Kosack M.C.U."/>
            <person name="Hassani-Pak K."/>
            <person name="Hammond-Kosack K.E."/>
        </authorList>
    </citation>
    <scope>NUCLEOTIDE SEQUENCE [LARGE SCALE GENOMIC DNA]</scope>
    <source>
        <strain>ATCC MYA-4620 / CBS 123657 / FGSC 9075 / NRRL 31084 / PH-1</strain>
    </source>
</reference>
<keyword id="KW-0961">Cell wall biogenesis/degradation</keyword>
<keyword id="KW-0256">Endoplasmic reticulum</keyword>
<keyword id="KW-0328">Glycosyltransferase</keyword>
<keyword id="KW-0337">GPI-anchor biosynthesis</keyword>
<keyword id="KW-0472">Membrane</keyword>
<keyword id="KW-1185">Reference proteome</keyword>
<keyword id="KW-0808">Transferase</keyword>
<keyword id="KW-0812">Transmembrane</keyword>
<keyword id="KW-1133">Transmembrane helix</keyword>
<proteinExistence type="inferred from homology"/>
<gene>
    <name type="primary">GPI14</name>
    <name type="ORF">FGRRES_09385</name>
    <name type="ORF">FGSG_09385</name>
</gene>
<evidence type="ECO:0000250" key="1"/>
<evidence type="ECO:0000255" key="2"/>
<evidence type="ECO:0000305" key="3"/>
<sequence length="422" mass="47721">MPSIAPFLRTTPLFTISLLLRLGLLFYGIYQDAHSALKYTDIDYLVFTDASRFVADGQSPYARDTYRYTPLLAWILLPTVRFPAFGKLVFAAADLLAGWLILRVLRRRGMDEATAGGFSALWLWNPMVATISTRGSSEGLLGVLTMGLLWAVDRRKFSLAAIILGLSVHFKIYPFIYAPAIVWWMDDARLGKETKAAPQSSSIKDAVANFFTPDRLKFGLLSLITFMILNLVMFAIYETPFLVHTYFHHVTRIDHRHNFSPYNVLLYLTSATPAHAAPAFRIESFAFLPQLLLSCVLIPLALAKRDLATSMMAQTFAFVTFNKVCTSQYFLWYMIFLPLYLPNSSFLRNGKLGIFALLLWIVSQAAWLQQGYELEFLGISTFYPGLWLASIAFFLVNCWILGVIISDGARQSTRSTVKFHVE</sequence>
<name>GPI14_GIBZE</name>
<protein>
    <recommendedName>
        <fullName>GPI mannosyltransferase 1</fullName>
        <ecNumber>2.4.1.-</ecNumber>
    </recommendedName>
    <alternativeName>
        <fullName>GPI mannosyltransferase I</fullName>
        <shortName>GPI-MT-I</shortName>
    </alternativeName>
    <alternativeName>
        <fullName>Glycosylphosphatidylinositol-anchor biosynthesis protein 14</fullName>
    </alternativeName>
</protein>
<accession>Q4I073</accession>
<accession>A0A0E0SC47</accession>
<accession>V6RNB1</accession>